<reference key="1">
    <citation type="submission" date="2005-03" db="EMBL/GenBank/DDBJ databases">
        <title>Annotation of the Saccharomyces cerevisiae RM11-1a genome.</title>
        <authorList>
            <consortium name="The Broad Institute Genome Sequencing Platform"/>
            <person name="Birren B.W."/>
            <person name="Lander E.S."/>
            <person name="Galagan J.E."/>
            <person name="Nusbaum C."/>
            <person name="Devon K."/>
            <person name="Cuomo C."/>
            <person name="Jaffe D.B."/>
            <person name="Butler J."/>
            <person name="Alvarez P."/>
            <person name="Gnerre S."/>
            <person name="Grabherr M."/>
            <person name="Kleber M."/>
            <person name="Mauceli E.W."/>
            <person name="Brockman W."/>
            <person name="MacCallum I.A."/>
            <person name="Rounsley S."/>
            <person name="Young S.K."/>
            <person name="LaButti K."/>
            <person name="Pushparaj V."/>
            <person name="DeCaprio D."/>
            <person name="Crawford M."/>
            <person name="Koehrsen M."/>
            <person name="Engels R."/>
            <person name="Montgomery P."/>
            <person name="Pearson M."/>
            <person name="Howarth C."/>
            <person name="Larson L."/>
            <person name="Luoma S."/>
            <person name="White J."/>
            <person name="O'Leary S."/>
            <person name="Kodira C.D."/>
            <person name="Zeng Q."/>
            <person name="Yandava C."/>
            <person name="Alvarado L."/>
            <person name="Pratt S."/>
            <person name="Kruglyak L."/>
        </authorList>
    </citation>
    <scope>NUCLEOTIDE SEQUENCE [LARGE SCALE GENOMIC DNA]</scope>
    <source>
        <strain>RM11-1a</strain>
    </source>
</reference>
<proteinExistence type="inferred from homology"/>
<evidence type="ECO:0000250" key="1">
    <source>
        <dbReference type="UniProtKB" id="P07170"/>
    </source>
</evidence>
<evidence type="ECO:0000255" key="2">
    <source>
        <dbReference type="HAMAP-Rule" id="MF_03168"/>
    </source>
</evidence>
<sequence length="222" mass="24255">MSSSESIRMVLIGPPGAGKGTQAPNLQERFHAAHLATGDMLRSQIAKGTQLGLEAKKIMDQGGLVSDDIMVNMIKDELTNNPACKNGFILDGFPRTIPQAEKLDQMLKEQGTPLEKAIELKVDDELLVARITGRLIHPASGRSYHKIFNPPKEDMKDDVTGEALVQRSDDNADALKKRLAAYHAQTEPIVDFYKKTGIWAGVDASQPPATVWADILNKLGKD</sequence>
<feature type="initiator methionine" description="Removed" evidence="2">
    <location>
        <position position="1"/>
    </location>
</feature>
<feature type="propeptide" id="PRO_0000365691" description="Removed in mature form" evidence="2">
    <location>
        <position position="2"/>
    </location>
</feature>
<feature type="chain" id="PRO_0000365692" description="Adenylate kinase">
    <location>
        <begin position="3"/>
        <end position="222"/>
    </location>
</feature>
<feature type="region of interest" description="NMP" evidence="2">
    <location>
        <begin position="36"/>
        <end position="65"/>
    </location>
</feature>
<feature type="region of interest" description="LID" evidence="2">
    <location>
        <begin position="133"/>
        <end position="170"/>
    </location>
</feature>
<feature type="binding site" evidence="2">
    <location>
        <begin position="16"/>
        <end position="21"/>
    </location>
    <ligand>
        <name>ATP</name>
        <dbReference type="ChEBI" id="CHEBI:30616"/>
    </ligand>
</feature>
<feature type="binding site" evidence="2">
    <location>
        <position position="37"/>
    </location>
    <ligand>
        <name>AMP</name>
        <dbReference type="ChEBI" id="CHEBI:456215"/>
    </ligand>
</feature>
<feature type="binding site" evidence="2">
    <location>
        <position position="42"/>
    </location>
    <ligand>
        <name>AMP</name>
        <dbReference type="ChEBI" id="CHEBI:456215"/>
    </ligand>
</feature>
<feature type="binding site" evidence="2">
    <location>
        <begin position="63"/>
        <end position="65"/>
    </location>
    <ligand>
        <name>AMP</name>
        <dbReference type="ChEBI" id="CHEBI:456215"/>
    </ligand>
</feature>
<feature type="binding site" evidence="2">
    <location>
        <begin position="92"/>
        <end position="95"/>
    </location>
    <ligand>
        <name>AMP</name>
        <dbReference type="ChEBI" id="CHEBI:456215"/>
    </ligand>
</feature>
<feature type="binding site" evidence="2">
    <location>
        <position position="99"/>
    </location>
    <ligand>
        <name>AMP</name>
        <dbReference type="ChEBI" id="CHEBI:456215"/>
    </ligand>
</feature>
<feature type="binding site" evidence="2">
    <location>
        <position position="134"/>
    </location>
    <ligand>
        <name>ATP</name>
        <dbReference type="ChEBI" id="CHEBI:30616"/>
    </ligand>
</feature>
<feature type="binding site" evidence="2">
    <location>
        <begin position="143"/>
        <end position="144"/>
    </location>
    <ligand>
        <name>ATP</name>
        <dbReference type="ChEBI" id="CHEBI:30616"/>
    </ligand>
</feature>
<feature type="binding site" evidence="2">
    <location>
        <position position="167"/>
    </location>
    <ligand>
        <name>AMP</name>
        <dbReference type="ChEBI" id="CHEBI:456215"/>
    </ligand>
</feature>
<feature type="binding site" evidence="2">
    <location>
        <position position="178"/>
    </location>
    <ligand>
        <name>AMP</name>
        <dbReference type="ChEBI" id="CHEBI:456215"/>
    </ligand>
</feature>
<feature type="binding site" evidence="2">
    <location>
        <position position="206"/>
    </location>
    <ligand>
        <name>ATP</name>
        <dbReference type="ChEBI" id="CHEBI:30616"/>
    </ligand>
</feature>
<feature type="modified residue" description="N-acetylserine" evidence="1 2">
    <location>
        <position position="2"/>
    </location>
</feature>
<feature type="modified residue" description="N-acetylserine" evidence="1 2">
    <location>
        <position position="3"/>
    </location>
</feature>
<gene>
    <name evidence="2" type="primary">ADK1</name>
    <name type="ORF">SCRG_00298</name>
</gene>
<keyword id="KW-0007">Acetylation</keyword>
<keyword id="KW-0067">ATP-binding</keyword>
<keyword id="KW-0963">Cytoplasm</keyword>
<keyword id="KW-0418">Kinase</keyword>
<keyword id="KW-0496">Mitochondrion</keyword>
<keyword id="KW-0547">Nucleotide-binding</keyword>
<keyword id="KW-0808">Transferase</keyword>
<dbReference type="EC" id="2.7.4.3" evidence="2"/>
<dbReference type="EMBL" id="CH408043">
    <property type="protein sequence ID" value="EDV08090.1"/>
    <property type="molecule type" value="Genomic_DNA"/>
</dbReference>
<dbReference type="SMR" id="B3LG61"/>
<dbReference type="HOGENOM" id="CLU_032354_1_0_1"/>
<dbReference type="OrthoDB" id="13663at4893"/>
<dbReference type="Proteomes" id="UP000008335">
    <property type="component" value="Unassembled WGS sequence"/>
</dbReference>
<dbReference type="GO" id="GO:0005829">
    <property type="term" value="C:cytosol"/>
    <property type="evidence" value="ECO:0007669"/>
    <property type="project" value="UniProtKB-SubCell"/>
</dbReference>
<dbReference type="GO" id="GO:0005758">
    <property type="term" value="C:mitochondrial intermembrane space"/>
    <property type="evidence" value="ECO:0007669"/>
    <property type="project" value="UniProtKB-SubCell"/>
</dbReference>
<dbReference type="GO" id="GO:0004017">
    <property type="term" value="F:adenylate kinase activity"/>
    <property type="evidence" value="ECO:0007669"/>
    <property type="project" value="UniProtKB-UniRule"/>
</dbReference>
<dbReference type="GO" id="GO:0005524">
    <property type="term" value="F:ATP binding"/>
    <property type="evidence" value="ECO:0007669"/>
    <property type="project" value="UniProtKB-KW"/>
</dbReference>
<dbReference type="GO" id="GO:0006172">
    <property type="term" value="P:ADP biosynthetic process"/>
    <property type="evidence" value="ECO:0007669"/>
    <property type="project" value="UniProtKB-UniRule"/>
</dbReference>
<dbReference type="GO" id="GO:0046033">
    <property type="term" value="P:AMP metabolic process"/>
    <property type="evidence" value="ECO:0007669"/>
    <property type="project" value="UniProtKB-UniRule"/>
</dbReference>
<dbReference type="GO" id="GO:0046034">
    <property type="term" value="P:ATP metabolic process"/>
    <property type="evidence" value="ECO:0007669"/>
    <property type="project" value="UniProtKB-UniRule"/>
</dbReference>
<dbReference type="CDD" id="cd01428">
    <property type="entry name" value="ADK"/>
    <property type="match status" value="1"/>
</dbReference>
<dbReference type="FunFam" id="3.40.50.300:FF:000106">
    <property type="entry name" value="Adenylate kinase mitochondrial"/>
    <property type="match status" value="1"/>
</dbReference>
<dbReference type="Gene3D" id="3.40.50.300">
    <property type="entry name" value="P-loop containing nucleotide triphosphate hydrolases"/>
    <property type="match status" value="1"/>
</dbReference>
<dbReference type="HAMAP" id="MF_00235">
    <property type="entry name" value="Adenylate_kinase_Adk"/>
    <property type="match status" value="1"/>
</dbReference>
<dbReference type="HAMAP" id="MF_03168">
    <property type="entry name" value="Adenylate_kinase_AK2"/>
    <property type="match status" value="1"/>
</dbReference>
<dbReference type="InterPro" id="IPR006259">
    <property type="entry name" value="Adenyl_kin_sub"/>
</dbReference>
<dbReference type="InterPro" id="IPR000850">
    <property type="entry name" value="Adenylat/UMP-CMP_kin"/>
</dbReference>
<dbReference type="InterPro" id="IPR033690">
    <property type="entry name" value="Adenylat_kinase_CS"/>
</dbReference>
<dbReference type="InterPro" id="IPR007862">
    <property type="entry name" value="Adenylate_kinase_lid-dom"/>
</dbReference>
<dbReference type="InterPro" id="IPR028587">
    <property type="entry name" value="AK2"/>
</dbReference>
<dbReference type="InterPro" id="IPR027417">
    <property type="entry name" value="P-loop_NTPase"/>
</dbReference>
<dbReference type="NCBIfam" id="TIGR01351">
    <property type="entry name" value="adk"/>
    <property type="match status" value="1"/>
</dbReference>
<dbReference type="NCBIfam" id="NF001380">
    <property type="entry name" value="PRK00279.1-2"/>
    <property type="match status" value="1"/>
</dbReference>
<dbReference type="NCBIfam" id="NF001381">
    <property type="entry name" value="PRK00279.1-3"/>
    <property type="match status" value="1"/>
</dbReference>
<dbReference type="NCBIfam" id="NF011100">
    <property type="entry name" value="PRK14527.1"/>
    <property type="match status" value="1"/>
</dbReference>
<dbReference type="PANTHER" id="PTHR23359">
    <property type="entry name" value="NUCLEOTIDE KINASE"/>
    <property type="match status" value="1"/>
</dbReference>
<dbReference type="Pfam" id="PF00406">
    <property type="entry name" value="ADK"/>
    <property type="match status" value="1"/>
</dbReference>
<dbReference type="Pfam" id="PF05191">
    <property type="entry name" value="ADK_lid"/>
    <property type="match status" value="1"/>
</dbReference>
<dbReference type="PRINTS" id="PR00094">
    <property type="entry name" value="ADENYLTKNASE"/>
</dbReference>
<dbReference type="SUPFAM" id="SSF52540">
    <property type="entry name" value="P-loop containing nucleoside triphosphate hydrolases"/>
    <property type="match status" value="1"/>
</dbReference>
<dbReference type="PROSITE" id="PS00113">
    <property type="entry name" value="ADENYLATE_KINASE"/>
    <property type="match status" value="1"/>
</dbReference>
<protein>
    <recommendedName>
        <fullName evidence="2">Adenylate kinase</fullName>
        <ecNumber evidence="2">2.7.4.3</ecNumber>
    </recommendedName>
    <alternativeName>
        <fullName evidence="2">ATP-AMP transphosphorylase</fullName>
    </alternativeName>
    <alternativeName>
        <fullName evidence="2">ATP:AMP phosphotransferase</fullName>
    </alternativeName>
    <alternativeName>
        <fullName evidence="2">Adenylate kinase cytosolic and mitochondrial</fullName>
    </alternativeName>
    <alternativeName>
        <fullName evidence="2">Adenylate monophosphate kinase</fullName>
    </alternativeName>
</protein>
<comment type="function">
    <text evidence="2">Catalyzes the reversible transfer of the terminal phosphate group between ATP and AMP. Plays an important role in cellular energy homeostasis and in adenine nucleotide metabolism. Adenylate kinase activity is critical for regulation of the phosphate utilization and the AMP de novo biosynthesis pathways.</text>
</comment>
<comment type="catalytic activity">
    <reaction evidence="2">
        <text>AMP + ATP = 2 ADP</text>
        <dbReference type="Rhea" id="RHEA:12973"/>
        <dbReference type="ChEBI" id="CHEBI:30616"/>
        <dbReference type="ChEBI" id="CHEBI:456215"/>
        <dbReference type="ChEBI" id="CHEBI:456216"/>
        <dbReference type="EC" id="2.7.4.3"/>
    </reaction>
</comment>
<comment type="subunit">
    <text evidence="2">Monomer.</text>
</comment>
<comment type="subcellular location">
    <subcellularLocation>
        <location evidence="2">Cytoplasm</location>
        <location evidence="2">Cytosol</location>
    </subcellularLocation>
    <subcellularLocation>
        <location evidence="2">Mitochondrion intermembrane space</location>
    </subcellularLocation>
    <text evidence="2">Predominantly mitochondrial.</text>
</comment>
<comment type="domain">
    <text evidence="2">Consists of three domains, a large central CORE domain and two small peripheral domains, NMPbind and LID, which undergo movements during catalysis. The LID domain closes over the site of phosphoryl transfer upon ATP binding. Assembling and dissambling the active center during each catalytic cycle provides an effective means to prevent ATP hydrolysis.</text>
</comment>
<comment type="similarity">
    <text evidence="2">Belongs to the adenylate kinase family. AK2 subfamily.</text>
</comment>
<accession>B3LG61</accession>
<organism>
    <name type="scientific">Saccharomyces cerevisiae (strain RM11-1a)</name>
    <name type="common">Baker's yeast</name>
    <dbReference type="NCBI Taxonomy" id="285006"/>
    <lineage>
        <taxon>Eukaryota</taxon>
        <taxon>Fungi</taxon>
        <taxon>Dikarya</taxon>
        <taxon>Ascomycota</taxon>
        <taxon>Saccharomycotina</taxon>
        <taxon>Saccharomycetes</taxon>
        <taxon>Saccharomycetales</taxon>
        <taxon>Saccharomycetaceae</taxon>
        <taxon>Saccharomyces</taxon>
    </lineage>
</organism>
<name>KAD2_YEAS1</name>